<dbReference type="EMBL" id="BC133577">
    <property type="protein sequence ID" value="AAI33578.1"/>
    <property type="molecule type" value="mRNA"/>
</dbReference>
<dbReference type="RefSeq" id="NP_001075205.1">
    <property type="nucleotide sequence ID" value="NM_001081736.2"/>
</dbReference>
<dbReference type="SMR" id="A2VE53"/>
<dbReference type="FunCoup" id="A2VE53">
    <property type="interactions" value="571"/>
</dbReference>
<dbReference type="STRING" id="9913.ENSBTAP00000028864"/>
<dbReference type="GlyCosmos" id="A2VE53">
    <property type="glycosylation" value="2 sites, No reported glycans"/>
</dbReference>
<dbReference type="GlyGen" id="A2VE53">
    <property type="glycosylation" value="2 sites"/>
</dbReference>
<dbReference type="PaxDb" id="9913-ENSBTAP00000028864"/>
<dbReference type="GeneID" id="540640"/>
<dbReference type="KEGG" id="bta:540640"/>
<dbReference type="CTD" id="121457"/>
<dbReference type="VEuPathDB" id="HostDB:ENSBTAG00000021660"/>
<dbReference type="eggNOG" id="ENOG502RXG3">
    <property type="taxonomic scope" value="Eukaryota"/>
</dbReference>
<dbReference type="HOGENOM" id="CLU_061486_0_0_1"/>
<dbReference type="InParanoid" id="A2VE53"/>
<dbReference type="OMA" id="KKCESVQ"/>
<dbReference type="OrthoDB" id="9907187at2759"/>
<dbReference type="TreeFam" id="TF331715"/>
<dbReference type="Reactome" id="R-BTA-9758274">
    <property type="pathway name" value="Regulation of NF-kappa B signaling"/>
</dbReference>
<dbReference type="Proteomes" id="UP000009136">
    <property type="component" value="Chromosome 5"/>
</dbReference>
<dbReference type="Bgee" id="ENSBTAG00000021660">
    <property type="expression patterns" value="Expressed in caput epididymis and 105 other cell types or tissues"/>
</dbReference>
<dbReference type="GO" id="GO:0005789">
    <property type="term" value="C:endoplasmic reticulum membrane"/>
    <property type="evidence" value="ECO:0007669"/>
    <property type="project" value="UniProtKB-SubCell"/>
</dbReference>
<dbReference type="Gene3D" id="1.10.287.1490">
    <property type="match status" value="1"/>
</dbReference>
<dbReference type="InterPro" id="IPR024152">
    <property type="entry name" value="Inh_kappa-B_kinase-int"/>
</dbReference>
<dbReference type="PANTHER" id="PTHR21734">
    <property type="entry name" value="INHIBITOR OF NUCLEAR FACTOR KAPPA-B KINASE-INTERACTING PROTEIN"/>
    <property type="match status" value="1"/>
</dbReference>
<dbReference type="PANTHER" id="PTHR21734:SF10">
    <property type="entry name" value="INHIBITOR OF NUCLEAR FACTOR KAPPA-B KINASE-INTERACTING PROTEIN"/>
    <property type="match status" value="1"/>
</dbReference>
<name>IKIP_BOVIN</name>
<feature type="chain" id="PRO_0000342260" description="Inhibitor of nuclear factor kappa-B kinase-interacting protein">
    <location>
        <begin position="1"/>
        <end position="349"/>
    </location>
</feature>
<feature type="transmembrane region" description="Helical" evidence="2">
    <location>
        <begin position="45"/>
        <end position="61"/>
    </location>
</feature>
<feature type="region of interest" description="Disordered" evidence="3">
    <location>
        <begin position="1"/>
        <end position="39"/>
    </location>
</feature>
<feature type="coiled-coil region" evidence="2">
    <location>
        <begin position="183"/>
        <end position="216"/>
    </location>
</feature>
<feature type="coiled-coil region" evidence="2">
    <location>
        <begin position="304"/>
        <end position="347"/>
    </location>
</feature>
<feature type="compositionally biased region" description="Basic residues" evidence="3">
    <location>
        <begin position="1"/>
        <end position="11"/>
    </location>
</feature>
<feature type="compositionally biased region" description="Basic and acidic residues" evidence="3">
    <location>
        <begin position="19"/>
        <end position="30"/>
    </location>
</feature>
<feature type="glycosylation site" description="N-linked (GlcNAc...) asparagine" evidence="2">
    <location>
        <position position="145"/>
    </location>
</feature>
<feature type="glycosylation site" description="N-linked (GlcNAc...) asparagine" evidence="2">
    <location>
        <position position="327"/>
    </location>
</feature>
<protein>
    <recommendedName>
        <fullName>Inhibitor of nuclear factor kappa-B kinase-interacting protein</fullName>
        <shortName>I kappa-B kinase-interacting protein</shortName>
        <shortName>IKBKB-interacting protein</shortName>
        <shortName>IKK-interacting protein</shortName>
    </recommendedName>
</protein>
<reference key="1">
    <citation type="submission" date="2007-02" db="EMBL/GenBank/DDBJ databases">
        <authorList>
            <consortium name="NIH - Mammalian Gene Collection (MGC) project"/>
        </authorList>
    </citation>
    <scope>NUCLEOTIDE SEQUENCE [LARGE SCALE MRNA]</scope>
    <source>
        <strain>Hereford</strain>
        <tissue>Fetal liver</tissue>
    </source>
</reference>
<gene>
    <name type="primary">IKBIP</name>
    <name type="synonym">IKIP</name>
</gene>
<proteinExistence type="evidence at transcript level"/>
<accession>A2VE53</accession>
<organism>
    <name type="scientific">Bos taurus</name>
    <name type="common">Bovine</name>
    <dbReference type="NCBI Taxonomy" id="9913"/>
    <lineage>
        <taxon>Eukaryota</taxon>
        <taxon>Metazoa</taxon>
        <taxon>Chordata</taxon>
        <taxon>Craniata</taxon>
        <taxon>Vertebrata</taxon>
        <taxon>Euteleostomi</taxon>
        <taxon>Mammalia</taxon>
        <taxon>Eutheria</taxon>
        <taxon>Laurasiatheria</taxon>
        <taxon>Artiodactyla</taxon>
        <taxon>Ruminantia</taxon>
        <taxon>Pecora</taxon>
        <taxon>Bovidae</taxon>
        <taxon>Bovinae</taxon>
        <taxon>Bos</taxon>
    </lineage>
</organism>
<comment type="function">
    <text evidence="1">Target of p53/TP53 with pro-apoptotic function.</text>
</comment>
<comment type="subcellular location">
    <subcellularLocation>
        <location evidence="1">Endoplasmic reticulum membrane</location>
        <topology evidence="1">Single-pass membrane protein</topology>
    </subcellularLocation>
</comment>
<comment type="PTM">
    <text evidence="1">N-glycosylated.</text>
</comment>
<comment type="miscellaneous">
    <text>Shares a common promoter with APAF1 from which the 2 genes are transcribed in opposite directions.</text>
</comment>
<sequence>MSEVKSRKKSGTKGAPAEPGKRNEGGKSPEARGGGGRGWADPRTGVSLLSLGTCLGLAWFVFQQSEKFAKVENQYQLLKMETSEFQGLQSKISLISEKCQKSEAIIEQLKAFQIITHLKHLQEEIYEVKTWSSRISEKQDILNNNLTTVSQDVAKADQSTTSMAKDIGLKITTIKTDIRRMSGLVTDVTSLTDSVQELENKIEKVEKNTVKNIGDLLSSSIDRTAMLRKTASENSQRINSVKKILSELQGDFNKHTDRLLSLESDRAKVLKTVTFANDLKPKVYNLKKDFSRLEPLVNDLTLRIGRLVTDLQQREKEIAFLKEKISNLTTVRAEIKDMKDEIKHISDMD</sequence>
<evidence type="ECO:0000250" key="1"/>
<evidence type="ECO:0000255" key="2"/>
<evidence type="ECO:0000256" key="3">
    <source>
        <dbReference type="SAM" id="MobiDB-lite"/>
    </source>
</evidence>
<keyword id="KW-0175">Coiled coil</keyword>
<keyword id="KW-0256">Endoplasmic reticulum</keyword>
<keyword id="KW-0325">Glycoprotein</keyword>
<keyword id="KW-0472">Membrane</keyword>
<keyword id="KW-1185">Reference proteome</keyword>
<keyword id="KW-0812">Transmembrane</keyword>
<keyword id="KW-1133">Transmembrane helix</keyword>